<protein>
    <recommendedName>
        <fullName>Acetyltransferase At1g77540</fullName>
        <ecNumber>2.3.1.-</ecNumber>
    </recommendedName>
    <alternativeName>
        <fullName>Minimal acetyltransferase</fullName>
    </alternativeName>
</protein>
<gene>
    <name type="ordered locus">At1g77540</name>
    <name type="ORF">T5M16.13</name>
</gene>
<keyword id="KW-0002">3D-structure</keyword>
<keyword id="KW-0007">Acetylation</keyword>
<keyword id="KW-0012">Acyltransferase</keyword>
<keyword id="KW-0576">Peroxisome</keyword>
<keyword id="KW-1185">Reference proteome</keyword>
<keyword id="KW-0808">Transferase</keyword>
<accession>Q9CAQ2</accession>
<accession>Q2HIN3</accession>
<accession>Q8LEN2</accession>
<proteinExistence type="evidence at protein level"/>
<organism>
    <name type="scientific">Arabidopsis thaliana</name>
    <name type="common">Mouse-ear cress</name>
    <dbReference type="NCBI Taxonomy" id="3702"/>
    <lineage>
        <taxon>Eukaryota</taxon>
        <taxon>Viridiplantae</taxon>
        <taxon>Streptophyta</taxon>
        <taxon>Embryophyta</taxon>
        <taxon>Tracheophyta</taxon>
        <taxon>Spermatophyta</taxon>
        <taxon>Magnoliopsida</taxon>
        <taxon>eudicotyledons</taxon>
        <taxon>Gunneridae</taxon>
        <taxon>Pentapetalae</taxon>
        <taxon>rosids</taxon>
        <taxon>malvids</taxon>
        <taxon>Brassicales</taxon>
        <taxon>Brassicaceae</taxon>
        <taxon>Camelineae</taxon>
        <taxon>Arabidopsis</taxon>
    </lineage>
</organism>
<evidence type="ECO:0000255" key="1"/>
<evidence type="ECO:0000255" key="2">
    <source>
        <dbReference type="PROSITE-ProRule" id="PRU00532"/>
    </source>
</evidence>
<evidence type="ECO:0000269" key="3">
    <source>
    </source>
</evidence>
<evidence type="ECO:0000269" key="4">
    <source>
    </source>
</evidence>
<evidence type="ECO:0000269" key="5">
    <source>
    </source>
</evidence>
<evidence type="ECO:0000305" key="6"/>
<evidence type="ECO:0007744" key="7">
    <source>
    </source>
</evidence>
<evidence type="ECO:0007829" key="8">
    <source>
        <dbReference type="PDB" id="1XMT"/>
    </source>
</evidence>
<evidence type="ECO:0007829" key="9">
    <source>
        <dbReference type="PDB" id="2EVN"/>
    </source>
</evidence>
<feature type="initiator methionine" description="Removed" evidence="7">
    <location>
        <position position="1"/>
    </location>
</feature>
<feature type="chain" id="PRO_0000220598" description="Acetyltransferase At1g77540">
    <location>
        <begin position="2"/>
        <end position="114"/>
    </location>
</feature>
<feature type="domain" description="N-acetyltransferase" evidence="2">
    <location>
        <begin position="18"/>
        <end position="106"/>
    </location>
</feature>
<feature type="active site" description="Nucleophile" evidence="1">
    <location>
        <position position="87"/>
    </location>
</feature>
<feature type="binding site">
    <location>
        <begin position="52"/>
        <end position="55"/>
    </location>
    <ligand>
        <name>CoA</name>
        <dbReference type="ChEBI" id="CHEBI:57287"/>
    </ligand>
</feature>
<feature type="binding site">
    <location>
        <begin position="61"/>
        <end position="66"/>
    </location>
    <ligand>
        <name>CoA</name>
        <dbReference type="ChEBI" id="CHEBI:57287"/>
    </ligand>
</feature>
<feature type="binding site">
    <location>
        <begin position="88"/>
        <end position="89"/>
    </location>
    <ligand>
        <name>CoA</name>
        <dbReference type="ChEBI" id="CHEBI:57287"/>
    </ligand>
</feature>
<feature type="binding site" evidence="3 4">
    <location>
        <position position="93"/>
    </location>
    <ligand>
        <name>CoA</name>
        <dbReference type="ChEBI" id="CHEBI:57287"/>
    </ligand>
</feature>
<feature type="binding site" evidence="3 4">
    <location>
        <position position="97"/>
    </location>
    <ligand>
        <name>CoA</name>
        <dbReference type="ChEBI" id="CHEBI:57287"/>
    </ligand>
</feature>
<feature type="modified residue" description="N-acetylthreonine" evidence="7">
    <location>
        <position position="2"/>
    </location>
</feature>
<feature type="strand" evidence="8">
    <location>
        <begin position="19"/>
        <end position="22"/>
    </location>
</feature>
<feature type="helix" evidence="8">
    <location>
        <begin position="23"/>
        <end position="25"/>
    </location>
</feature>
<feature type="strand" evidence="8">
    <location>
        <begin position="27"/>
        <end position="30"/>
    </location>
</feature>
<feature type="strand" evidence="8">
    <location>
        <begin position="33"/>
        <end position="42"/>
    </location>
</feature>
<feature type="turn" evidence="8">
    <location>
        <begin position="43"/>
        <end position="46"/>
    </location>
</feature>
<feature type="strand" evidence="8">
    <location>
        <begin position="47"/>
        <end position="54"/>
    </location>
</feature>
<feature type="helix" evidence="8">
    <location>
        <begin position="57"/>
        <end position="59"/>
    </location>
</feature>
<feature type="helix" evidence="8">
    <location>
        <begin position="64"/>
        <end position="78"/>
    </location>
</feature>
<feature type="strand" evidence="8">
    <location>
        <begin position="82"/>
        <end position="85"/>
    </location>
</feature>
<feature type="helix" evidence="8">
    <location>
        <begin position="88"/>
        <end position="92"/>
    </location>
</feature>
<feature type="helix" evidence="8">
    <location>
        <begin position="94"/>
        <end position="97"/>
    </location>
</feature>
<feature type="helix" evidence="8">
    <location>
        <begin position="99"/>
        <end position="104"/>
    </location>
</feature>
<feature type="strand" evidence="9">
    <location>
        <begin position="105"/>
        <end position="110"/>
    </location>
</feature>
<dbReference type="EC" id="2.3.1.-"/>
<dbReference type="EMBL" id="AC010704">
    <property type="protein sequence ID" value="AAG51659.1"/>
    <property type="status" value="ALT_SEQ"/>
    <property type="molecule type" value="Genomic_DNA"/>
</dbReference>
<dbReference type="EMBL" id="CP002684">
    <property type="protein sequence ID" value="AEE35991.1"/>
    <property type="molecule type" value="Genomic_DNA"/>
</dbReference>
<dbReference type="EMBL" id="BT024548">
    <property type="protein sequence ID" value="ABD38887.1"/>
    <property type="molecule type" value="mRNA"/>
</dbReference>
<dbReference type="EMBL" id="AY085337">
    <property type="protein sequence ID" value="AAM62568.1"/>
    <property type="molecule type" value="mRNA"/>
</dbReference>
<dbReference type="PIR" id="H96804">
    <property type="entry name" value="H96804"/>
</dbReference>
<dbReference type="RefSeq" id="NP_565157.1">
    <property type="nucleotide sequence ID" value="NM_106403.4"/>
</dbReference>
<dbReference type="PDB" id="1XMT">
    <property type="method" value="X-ray"/>
    <property type="resolution" value="1.15 A"/>
    <property type="chains" value="A=13-114"/>
</dbReference>
<dbReference type="PDB" id="2EVN">
    <property type="method" value="NMR"/>
    <property type="chains" value="A=12-114"/>
</dbReference>
<dbReference type="PDB" id="2IL4">
    <property type="method" value="X-ray"/>
    <property type="resolution" value="2.05 A"/>
    <property type="chains" value="A=12-114"/>
</dbReference>
<dbReference type="PDB" id="2Q44">
    <property type="method" value="X-ray"/>
    <property type="resolution" value="1.15 A"/>
    <property type="chains" value="A=13-114"/>
</dbReference>
<dbReference type="PDB" id="2Q4Y">
    <property type="method" value="X-ray"/>
    <property type="resolution" value="2.06 A"/>
    <property type="chains" value="A=12-114"/>
</dbReference>
<dbReference type="PDBsum" id="1XMT"/>
<dbReference type="PDBsum" id="2EVN"/>
<dbReference type="PDBsum" id="2IL4"/>
<dbReference type="PDBsum" id="2Q44"/>
<dbReference type="PDBsum" id="2Q4Y"/>
<dbReference type="BMRB" id="Q9CAQ2"/>
<dbReference type="SMR" id="Q9CAQ2"/>
<dbReference type="FunCoup" id="Q9CAQ2">
    <property type="interactions" value="10"/>
</dbReference>
<dbReference type="STRING" id="3702.Q9CAQ2"/>
<dbReference type="iPTMnet" id="Q9CAQ2"/>
<dbReference type="PaxDb" id="3702-AT1G77540.1"/>
<dbReference type="ProteomicsDB" id="242535"/>
<dbReference type="DNASU" id="844090"/>
<dbReference type="EnsemblPlants" id="AT1G77540.1">
    <property type="protein sequence ID" value="AT1G77540.1"/>
    <property type="gene ID" value="AT1G77540"/>
</dbReference>
<dbReference type="GeneID" id="844090"/>
<dbReference type="Gramene" id="AT1G77540.1">
    <property type="protein sequence ID" value="AT1G77540.1"/>
    <property type="gene ID" value="AT1G77540"/>
</dbReference>
<dbReference type="KEGG" id="ath:AT1G77540"/>
<dbReference type="Araport" id="AT1G77540"/>
<dbReference type="TAIR" id="AT1G77540"/>
<dbReference type="eggNOG" id="ENOG502S1MA">
    <property type="taxonomic scope" value="Eukaryota"/>
</dbReference>
<dbReference type="HOGENOM" id="CLU_132888_1_0_1"/>
<dbReference type="InParanoid" id="Q9CAQ2"/>
<dbReference type="OMA" id="KIVWSER"/>
<dbReference type="OrthoDB" id="74247at2759"/>
<dbReference type="PhylomeDB" id="Q9CAQ2"/>
<dbReference type="EvolutionaryTrace" id="Q9CAQ2"/>
<dbReference type="PRO" id="PR:Q9CAQ2"/>
<dbReference type="Proteomes" id="UP000006548">
    <property type="component" value="Chromosome 1"/>
</dbReference>
<dbReference type="ExpressionAtlas" id="Q9CAQ2">
    <property type="expression patterns" value="baseline and differential"/>
</dbReference>
<dbReference type="GO" id="GO:0005777">
    <property type="term" value="C:peroxisome"/>
    <property type="evidence" value="ECO:0000314"/>
    <property type="project" value="TAIR"/>
</dbReference>
<dbReference type="GO" id="GO:0004402">
    <property type="term" value="F:histone acetyltransferase activity"/>
    <property type="evidence" value="ECO:0000314"/>
    <property type="project" value="TAIR"/>
</dbReference>
<dbReference type="FunFam" id="3.40.630.30:FF:000106">
    <property type="entry name" value="Acetyltransferase At1g77540"/>
    <property type="match status" value="1"/>
</dbReference>
<dbReference type="Gene3D" id="3.40.630.30">
    <property type="match status" value="1"/>
</dbReference>
<dbReference type="InterPro" id="IPR016181">
    <property type="entry name" value="Acyl_CoA_acyltransferase"/>
</dbReference>
<dbReference type="InterPro" id="IPR045057">
    <property type="entry name" value="Gcn5-rel_NAT"/>
</dbReference>
<dbReference type="InterPro" id="IPR031165">
    <property type="entry name" value="GNAT_YJDJ"/>
</dbReference>
<dbReference type="PANTHER" id="PTHR31435">
    <property type="entry name" value="PROTEIN NATD1"/>
    <property type="match status" value="1"/>
</dbReference>
<dbReference type="PANTHER" id="PTHR31435:SF9">
    <property type="entry name" value="PROTEIN NATD1"/>
    <property type="match status" value="1"/>
</dbReference>
<dbReference type="Pfam" id="PF14542">
    <property type="entry name" value="Acetyltransf_CG"/>
    <property type="match status" value="1"/>
</dbReference>
<dbReference type="SUPFAM" id="SSF55729">
    <property type="entry name" value="Acyl-CoA N-acyltransferases (Nat)"/>
    <property type="match status" value="1"/>
</dbReference>
<dbReference type="PROSITE" id="PS51729">
    <property type="entry name" value="GNAT_YJDJ"/>
    <property type="match status" value="1"/>
</dbReference>
<comment type="function">
    <text evidence="3">Possesses in vitro histone acetyltransferase activity with histones H3 and H4.</text>
</comment>
<comment type="subcellular location">
    <subcellularLocation>
        <location evidence="5">Peroxisome</location>
    </subcellularLocation>
</comment>
<comment type="sequence caution" evidence="6">
    <conflict type="erroneous gene model prediction">
        <sequence resource="EMBL-CDS" id="AAG51659"/>
    </conflict>
</comment>
<sequence>MTNTAATTEAKMATEPPKIVWNEGKRRFETEDHEAFIEYKMRNNGKVMDLVHTYVPSFKRGLGLASHLCVAAFEHASSHSISIIPSCSYVSDTFLPRNPSWKPLIHSEVFKSSI</sequence>
<name>Y1754_ARATH</name>
<reference key="1">
    <citation type="journal article" date="2000" name="Nature">
        <title>Sequence and analysis of chromosome 1 of the plant Arabidopsis thaliana.</title>
        <authorList>
            <person name="Theologis A."/>
            <person name="Ecker J.R."/>
            <person name="Palm C.J."/>
            <person name="Federspiel N.A."/>
            <person name="Kaul S."/>
            <person name="White O."/>
            <person name="Alonso J."/>
            <person name="Altafi H."/>
            <person name="Araujo R."/>
            <person name="Bowman C.L."/>
            <person name="Brooks S.Y."/>
            <person name="Buehler E."/>
            <person name="Chan A."/>
            <person name="Chao Q."/>
            <person name="Chen H."/>
            <person name="Cheuk R.F."/>
            <person name="Chin C.W."/>
            <person name="Chung M.K."/>
            <person name="Conn L."/>
            <person name="Conway A.B."/>
            <person name="Conway A.R."/>
            <person name="Creasy T.H."/>
            <person name="Dewar K."/>
            <person name="Dunn P."/>
            <person name="Etgu P."/>
            <person name="Feldblyum T.V."/>
            <person name="Feng J.-D."/>
            <person name="Fong B."/>
            <person name="Fujii C.Y."/>
            <person name="Gill J.E."/>
            <person name="Goldsmith A.D."/>
            <person name="Haas B."/>
            <person name="Hansen N.F."/>
            <person name="Hughes B."/>
            <person name="Huizar L."/>
            <person name="Hunter J.L."/>
            <person name="Jenkins J."/>
            <person name="Johnson-Hopson C."/>
            <person name="Khan S."/>
            <person name="Khaykin E."/>
            <person name="Kim C.J."/>
            <person name="Koo H.L."/>
            <person name="Kremenetskaia I."/>
            <person name="Kurtz D.B."/>
            <person name="Kwan A."/>
            <person name="Lam B."/>
            <person name="Langin-Hooper S."/>
            <person name="Lee A."/>
            <person name="Lee J.M."/>
            <person name="Lenz C.A."/>
            <person name="Li J.H."/>
            <person name="Li Y.-P."/>
            <person name="Lin X."/>
            <person name="Liu S.X."/>
            <person name="Liu Z.A."/>
            <person name="Luros J.S."/>
            <person name="Maiti R."/>
            <person name="Marziali A."/>
            <person name="Militscher J."/>
            <person name="Miranda M."/>
            <person name="Nguyen M."/>
            <person name="Nierman W.C."/>
            <person name="Osborne B.I."/>
            <person name="Pai G."/>
            <person name="Peterson J."/>
            <person name="Pham P.K."/>
            <person name="Rizzo M."/>
            <person name="Rooney T."/>
            <person name="Rowley D."/>
            <person name="Sakano H."/>
            <person name="Salzberg S.L."/>
            <person name="Schwartz J.R."/>
            <person name="Shinn P."/>
            <person name="Southwick A.M."/>
            <person name="Sun H."/>
            <person name="Tallon L.J."/>
            <person name="Tambunga G."/>
            <person name="Toriumi M.J."/>
            <person name="Town C.D."/>
            <person name="Utterback T."/>
            <person name="Van Aken S."/>
            <person name="Vaysberg M."/>
            <person name="Vysotskaia V.S."/>
            <person name="Walker M."/>
            <person name="Wu D."/>
            <person name="Yu G."/>
            <person name="Fraser C.M."/>
            <person name="Venter J.C."/>
            <person name="Davis R.W."/>
        </authorList>
    </citation>
    <scope>NUCLEOTIDE SEQUENCE [LARGE SCALE GENOMIC DNA]</scope>
    <source>
        <strain>cv. Columbia</strain>
    </source>
</reference>
<reference key="2">
    <citation type="journal article" date="2017" name="Plant J.">
        <title>Araport11: a complete reannotation of the Arabidopsis thaliana reference genome.</title>
        <authorList>
            <person name="Cheng C.Y."/>
            <person name="Krishnakumar V."/>
            <person name="Chan A.P."/>
            <person name="Thibaud-Nissen F."/>
            <person name="Schobel S."/>
            <person name="Town C.D."/>
        </authorList>
    </citation>
    <scope>GENOME REANNOTATION</scope>
    <source>
        <strain>cv. Columbia</strain>
    </source>
</reference>
<reference key="3">
    <citation type="submission" date="2006-02" db="EMBL/GenBank/DDBJ databases">
        <title>Arabidopsis ORF clones.</title>
        <authorList>
            <person name="Shinn P."/>
            <person name="Chen H."/>
            <person name="Kim C.J."/>
            <person name="Ecker J.R."/>
        </authorList>
    </citation>
    <scope>NUCLEOTIDE SEQUENCE [LARGE SCALE MRNA]</scope>
    <source>
        <strain>cv. Columbia</strain>
    </source>
</reference>
<reference key="4">
    <citation type="submission" date="2002-03" db="EMBL/GenBank/DDBJ databases">
        <title>Full-length cDNA from Arabidopsis thaliana.</title>
        <authorList>
            <person name="Brover V.V."/>
            <person name="Troukhan M.E."/>
            <person name="Alexandrov N.A."/>
            <person name="Lu Y.-P."/>
            <person name="Flavell R.B."/>
            <person name="Feldmann K.A."/>
        </authorList>
    </citation>
    <scope>NUCLEOTIDE SEQUENCE [LARGE SCALE MRNA]</scope>
</reference>
<reference key="5">
    <citation type="journal article" date="2009" name="Plant Physiol.">
        <title>In-depth proteome analysis of Arabidopsis leaf peroxisomes combined with in vivo subcellular targeting verification indicates novel metabolic and regulatory functions of peroxisomes.</title>
        <authorList>
            <person name="Reumann S."/>
            <person name="Quan S."/>
            <person name="Aung K."/>
            <person name="Yang P."/>
            <person name="Manandhar-Shrestha K."/>
            <person name="Holbrook D."/>
            <person name="Linka N."/>
            <person name="Switzenberg R."/>
            <person name="Wilkerson C.G."/>
            <person name="Weber A.P."/>
            <person name="Olsen L.J."/>
            <person name="Hu J."/>
        </authorList>
    </citation>
    <scope>SUBCELLULAR LOCATION</scope>
</reference>
<reference key="6">
    <citation type="journal article" date="2012" name="Mol. Cell. Proteomics">
        <title>Comparative large-scale characterisation of plant vs. mammal proteins reveals similar and idiosyncratic N-alpha acetylation features.</title>
        <authorList>
            <person name="Bienvenut W.V."/>
            <person name="Sumpton D."/>
            <person name="Martinez A."/>
            <person name="Lilla S."/>
            <person name="Espagne C."/>
            <person name="Meinnel T."/>
            <person name="Giglione C."/>
        </authorList>
    </citation>
    <scope>ACETYLATION [LARGE SCALE ANALYSIS] AT THR-2</scope>
    <scope>CLEAVAGE OF INITIATOR METHIONINE [LARGE SCALE ANALYSIS]</scope>
    <scope>IDENTIFICATION BY MASS SPECTROMETRY [LARGE SCALE ANALYSIS]</scope>
</reference>
<reference key="7">
    <citation type="journal article" date="2006" name="Biochemistry">
        <title>Structure of Arabidopsis thaliana At1g77540 protein, a minimal acetyltransferase from the COG2388 family.</title>
        <authorList>
            <person name="Tyler R.C."/>
            <person name="Bitto E."/>
            <person name="Berndsen C.E."/>
            <person name="Bingman C.A."/>
            <person name="Singh S."/>
            <person name="Lee M.S."/>
            <person name="Wesenberg G.E."/>
            <person name="Denu J.M."/>
            <person name="Phillips G.N. Jr."/>
            <person name="Markley J.L."/>
        </authorList>
    </citation>
    <scope>X-RAY CRYSTALLOGRAPHY (1.15 ANGSTROMS) OF 12-114 IN COMPLEX WITH COENZYME A</scope>
    <scope>FUNCTION</scope>
</reference>
<reference key="8">
    <citation type="journal article" date="2007" name="Structure">
        <title>Ensemble refinement of protein crystal structures: validation and application.</title>
        <authorList>
            <person name="Levin E.J."/>
            <person name="Kondrashov D.A."/>
            <person name="Wesenberg G.E."/>
            <person name="Phillips G.N. Jr."/>
        </authorList>
    </citation>
    <scope>X-RAY CRYSTALLOGRAPHY (1.15 ANGSTROMS) OF 12-114 IN COMPLEX WITH COENZYME A</scope>
</reference>